<sequence length="493" mass="53992">MSLRLTNTLTRRTEPFTPLTPGKASIYCCGVTVYDLCHLGHARSYINWDVLRRFLIWRGLEVTFVQNFTDIDDKILKRAAEQNSSMTEVSERNIDAFHQDMDALGILRPDRMPRATQCLDGIRSLIGELEAKGAAYSADGDVYFAVMKHAGYGKLSGRDLSEQQDNAAGRVADAEEARKQHPFDFALWKGAKPGEPSFPSPWGEGRPGWHIECSAMVRAELGDTIDIHLGGADLVFPHHENEIAQSEAATGKELARVWMHNGMVNVGGQKMSKSLGNFTTIRALLESGVSPMTLRLFVLQAHYRKPLDFTAEALEAAATGWKGLNAALGLGERYSDQLGWPSPAALSEDAIGPQTSPDAEALQALEQQFIGSMEDDLNSSGALAVLFDLAKPLRALANRLERGDEPGLPEADIRNLAPRWQLLRELAVVLGLRGETSGQSNMDDESIDATIAARKAAKAAKNYAEADRIRNELTAQGIELIDKPGGITEWIRS</sequence>
<name>SYC_PARMW</name>
<gene>
    <name evidence="1" type="primary">cysS</name>
    <name type="ordered locus">SYNW0701</name>
</gene>
<dbReference type="EC" id="6.1.1.16" evidence="1"/>
<dbReference type="EMBL" id="BX569690">
    <property type="protein sequence ID" value="CAE07216.1"/>
    <property type="molecule type" value="Genomic_DNA"/>
</dbReference>
<dbReference type="RefSeq" id="WP_011127568.1">
    <property type="nucleotide sequence ID" value="NC_005070.1"/>
</dbReference>
<dbReference type="SMR" id="Q7U8C0"/>
<dbReference type="STRING" id="84588.SYNW0701"/>
<dbReference type="KEGG" id="syw:SYNW0701"/>
<dbReference type="eggNOG" id="COG0215">
    <property type="taxonomic scope" value="Bacteria"/>
</dbReference>
<dbReference type="HOGENOM" id="CLU_013528_0_1_3"/>
<dbReference type="Proteomes" id="UP000001422">
    <property type="component" value="Chromosome"/>
</dbReference>
<dbReference type="GO" id="GO:0005829">
    <property type="term" value="C:cytosol"/>
    <property type="evidence" value="ECO:0007669"/>
    <property type="project" value="TreeGrafter"/>
</dbReference>
<dbReference type="GO" id="GO:0005524">
    <property type="term" value="F:ATP binding"/>
    <property type="evidence" value="ECO:0007669"/>
    <property type="project" value="UniProtKB-UniRule"/>
</dbReference>
<dbReference type="GO" id="GO:0004817">
    <property type="term" value="F:cysteine-tRNA ligase activity"/>
    <property type="evidence" value="ECO:0007669"/>
    <property type="project" value="UniProtKB-UniRule"/>
</dbReference>
<dbReference type="GO" id="GO:0008270">
    <property type="term" value="F:zinc ion binding"/>
    <property type="evidence" value="ECO:0007669"/>
    <property type="project" value="UniProtKB-UniRule"/>
</dbReference>
<dbReference type="GO" id="GO:0006423">
    <property type="term" value="P:cysteinyl-tRNA aminoacylation"/>
    <property type="evidence" value="ECO:0007669"/>
    <property type="project" value="UniProtKB-UniRule"/>
</dbReference>
<dbReference type="CDD" id="cd00672">
    <property type="entry name" value="CysRS_core"/>
    <property type="match status" value="1"/>
</dbReference>
<dbReference type="FunFam" id="3.40.50.620:FF:000068">
    <property type="entry name" value="Cysteine--tRNA ligase"/>
    <property type="match status" value="1"/>
</dbReference>
<dbReference type="Gene3D" id="1.20.120.1910">
    <property type="entry name" value="Cysteine-tRNA ligase, C-terminal anti-codon recognition domain"/>
    <property type="match status" value="1"/>
</dbReference>
<dbReference type="Gene3D" id="3.40.50.620">
    <property type="entry name" value="HUPs"/>
    <property type="match status" value="1"/>
</dbReference>
<dbReference type="HAMAP" id="MF_00041">
    <property type="entry name" value="Cys_tRNA_synth"/>
    <property type="match status" value="1"/>
</dbReference>
<dbReference type="InterPro" id="IPR015803">
    <property type="entry name" value="Cys-tRNA-ligase"/>
</dbReference>
<dbReference type="InterPro" id="IPR015273">
    <property type="entry name" value="Cys-tRNA-synt_Ia_DALR"/>
</dbReference>
<dbReference type="InterPro" id="IPR024909">
    <property type="entry name" value="Cys-tRNA/MSH_ligase"/>
</dbReference>
<dbReference type="InterPro" id="IPR014729">
    <property type="entry name" value="Rossmann-like_a/b/a_fold"/>
</dbReference>
<dbReference type="InterPro" id="IPR032678">
    <property type="entry name" value="tRNA-synt_1_cat_dom"/>
</dbReference>
<dbReference type="InterPro" id="IPR009080">
    <property type="entry name" value="tRNAsynth_Ia_anticodon-bd"/>
</dbReference>
<dbReference type="NCBIfam" id="TIGR00435">
    <property type="entry name" value="cysS"/>
    <property type="match status" value="1"/>
</dbReference>
<dbReference type="PANTHER" id="PTHR10890:SF3">
    <property type="entry name" value="CYSTEINE--TRNA LIGASE, CYTOPLASMIC"/>
    <property type="match status" value="1"/>
</dbReference>
<dbReference type="PANTHER" id="PTHR10890">
    <property type="entry name" value="CYSTEINYL-TRNA SYNTHETASE"/>
    <property type="match status" value="1"/>
</dbReference>
<dbReference type="Pfam" id="PF09190">
    <property type="entry name" value="DALR_2"/>
    <property type="match status" value="1"/>
</dbReference>
<dbReference type="Pfam" id="PF01406">
    <property type="entry name" value="tRNA-synt_1e"/>
    <property type="match status" value="1"/>
</dbReference>
<dbReference type="PRINTS" id="PR00983">
    <property type="entry name" value="TRNASYNTHCYS"/>
</dbReference>
<dbReference type="SMART" id="SM00840">
    <property type="entry name" value="DALR_2"/>
    <property type="match status" value="1"/>
</dbReference>
<dbReference type="SUPFAM" id="SSF47323">
    <property type="entry name" value="Anticodon-binding domain of a subclass of class I aminoacyl-tRNA synthetases"/>
    <property type="match status" value="1"/>
</dbReference>
<dbReference type="SUPFAM" id="SSF52374">
    <property type="entry name" value="Nucleotidylyl transferase"/>
    <property type="match status" value="1"/>
</dbReference>
<reference key="1">
    <citation type="journal article" date="2003" name="Nature">
        <title>The genome of a motile marine Synechococcus.</title>
        <authorList>
            <person name="Palenik B."/>
            <person name="Brahamsha B."/>
            <person name="Larimer F.W."/>
            <person name="Land M.L."/>
            <person name="Hauser L."/>
            <person name="Chain P."/>
            <person name="Lamerdin J.E."/>
            <person name="Regala W."/>
            <person name="Allen E.E."/>
            <person name="McCarren J."/>
            <person name="Paulsen I.T."/>
            <person name="Dufresne A."/>
            <person name="Partensky F."/>
            <person name="Webb E.A."/>
            <person name="Waterbury J."/>
        </authorList>
    </citation>
    <scope>NUCLEOTIDE SEQUENCE [LARGE SCALE GENOMIC DNA]</scope>
    <source>
        <strain>WH8102</strain>
    </source>
</reference>
<feature type="chain" id="PRO_0000159504" description="Cysteine--tRNA ligase">
    <location>
        <begin position="1"/>
        <end position="493"/>
    </location>
</feature>
<feature type="short sequence motif" description="'HIGH' region">
    <location>
        <begin position="31"/>
        <end position="41"/>
    </location>
</feature>
<feature type="short sequence motif" description="'KMSKS' region">
    <location>
        <begin position="270"/>
        <end position="274"/>
    </location>
</feature>
<feature type="binding site" evidence="1">
    <location>
        <position position="29"/>
    </location>
    <ligand>
        <name>Zn(2+)</name>
        <dbReference type="ChEBI" id="CHEBI:29105"/>
    </ligand>
</feature>
<feature type="binding site" evidence="1">
    <location>
        <position position="213"/>
    </location>
    <ligand>
        <name>Zn(2+)</name>
        <dbReference type="ChEBI" id="CHEBI:29105"/>
    </ligand>
</feature>
<feature type="binding site" evidence="1">
    <location>
        <position position="238"/>
    </location>
    <ligand>
        <name>Zn(2+)</name>
        <dbReference type="ChEBI" id="CHEBI:29105"/>
    </ligand>
</feature>
<feature type="binding site" evidence="1">
    <location>
        <position position="242"/>
    </location>
    <ligand>
        <name>Zn(2+)</name>
        <dbReference type="ChEBI" id="CHEBI:29105"/>
    </ligand>
</feature>
<feature type="binding site" evidence="1">
    <location>
        <position position="273"/>
    </location>
    <ligand>
        <name>ATP</name>
        <dbReference type="ChEBI" id="CHEBI:30616"/>
    </ligand>
</feature>
<evidence type="ECO:0000255" key="1">
    <source>
        <dbReference type="HAMAP-Rule" id="MF_00041"/>
    </source>
</evidence>
<accession>Q7U8C0</accession>
<organism>
    <name type="scientific">Parasynechococcus marenigrum (strain WH8102)</name>
    <dbReference type="NCBI Taxonomy" id="84588"/>
    <lineage>
        <taxon>Bacteria</taxon>
        <taxon>Bacillati</taxon>
        <taxon>Cyanobacteriota</taxon>
        <taxon>Cyanophyceae</taxon>
        <taxon>Synechococcales</taxon>
        <taxon>Prochlorococcaceae</taxon>
        <taxon>Parasynechococcus</taxon>
        <taxon>Parasynechococcus marenigrum</taxon>
    </lineage>
</organism>
<comment type="catalytic activity">
    <reaction evidence="1">
        <text>tRNA(Cys) + L-cysteine + ATP = L-cysteinyl-tRNA(Cys) + AMP + diphosphate</text>
        <dbReference type="Rhea" id="RHEA:17773"/>
        <dbReference type="Rhea" id="RHEA-COMP:9661"/>
        <dbReference type="Rhea" id="RHEA-COMP:9679"/>
        <dbReference type="ChEBI" id="CHEBI:30616"/>
        <dbReference type="ChEBI" id="CHEBI:33019"/>
        <dbReference type="ChEBI" id="CHEBI:35235"/>
        <dbReference type="ChEBI" id="CHEBI:78442"/>
        <dbReference type="ChEBI" id="CHEBI:78517"/>
        <dbReference type="ChEBI" id="CHEBI:456215"/>
        <dbReference type="EC" id="6.1.1.16"/>
    </reaction>
</comment>
<comment type="cofactor">
    <cofactor evidence="1">
        <name>Zn(2+)</name>
        <dbReference type="ChEBI" id="CHEBI:29105"/>
    </cofactor>
    <text evidence="1">Binds 1 zinc ion per subunit.</text>
</comment>
<comment type="subunit">
    <text evidence="1">Monomer.</text>
</comment>
<comment type="subcellular location">
    <subcellularLocation>
        <location evidence="1">Cytoplasm</location>
    </subcellularLocation>
</comment>
<comment type="similarity">
    <text evidence="1">Belongs to the class-I aminoacyl-tRNA synthetase family.</text>
</comment>
<keyword id="KW-0030">Aminoacyl-tRNA synthetase</keyword>
<keyword id="KW-0067">ATP-binding</keyword>
<keyword id="KW-0963">Cytoplasm</keyword>
<keyword id="KW-0436">Ligase</keyword>
<keyword id="KW-0479">Metal-binding</keyword>
<keyword id="KW-0547">Nucleotide-binding</keyword>
<keyword id="KW-0648">Protein biosynthesis</keyword>
<keyword id="KW-0862">Zinc</keyword>
<proteinExistence type="inferred from homology"/>
<protein>
    <recommendedName>
        <fullName evidence="1">Cysteine--tRNA ligase</fullName>
        <ecNumber evidence="1">6.1.1.16</ecNumber>
    </recommendedName>
    <alternativeName>
        <fullName evidence="1">Cysteinyl-tRNA synthetase</fullName>
        <shortName evidence="1">CysRS</shortName>
    </alternativeName>
</protein>